<accession>Q9D650</accession>
<accession>Q99K34</accession>
<reference key="1">
    <citation type="journal article" date="2005" name="Science">
        <title>The transcriptional landscape of the mammalian genome.</title>
        <authorList>
            <person name="Carninci P."/>
            <person name="Kasukawa T."/>
            <person name="Katayama S."/>
            <person name="Gough J."/>
            <person name="Frith M.C."/>
            <person name="Maeda N."/>
            <person name="Oyama R."/>
            <person name="Ravasi T."/>
            <person name="Lenhard B."/>
            <person name="Wells C."/>
            <person name="Kodzius R."/>
            <person name="Shimokawa K."/>
            <person name="Bajic V.B."/>
            <person name="Brenner S.E."/>
            <person name="Batalov S."/>
            <person name="Forrest A.R."/>
            <person name="Zavolan M."/>
            <person name="Davis M.J."/>
            <person name="Wilming L.G."/>
            <person name="Aidinis V."/>
            <person name="Allen J.E."/>
            <person name="Ambesi-Impiombato A."/>
            <person name="Apweiler R."/>
            <person name="Aturaliya R.N."/>
            <person name="Bailey T.L."/>
            <person name="Bansal M."/>
            <person name="Baxter L."/>
            <person name="Beisel K.W."/>
            <person name="Bersano T."/>
            <person name="Bono H."/>
            <person name="Chalk A.M."/>
            <person name="Chiu K.P."/>
            <person name="Choudhary V."/>
            <person name="Christoffels A."/>
            <person name="Clutterbuck D.R."/>
            <person name="Crowe M.L."/>
            <person name="Dalla E."/>
            <person name="Dalrymple B.P."/>
            <person name="de Bono B."/>
            <person name="Della Gatta G."/>
            <person name="di Bernardo D."/>
            <person name="Down T."/>
            <person name="Engstrom P."/>
            <person name="Fagiolini M."/>
            <person name="Faulkner G."/>
            <person name="Fletcher C.F."/>
            <person name="Fukushima T."/>
            <person name="Furuno M."/>
            <person name="Futaki S."/>
            <person name="Gariboldi M."/>
            <person name="Georgii-Hemming P."/>
            <person name="Gingeras T.R."/>
            <person name="Gojobori T."/>
            <person name="Green R.E."/>
            <person name="Gustincich S."/>
            <person name="Harbers M."/>
            <person name="Hayashi Y."/>
            <person name="Hensch T.K."/>
            <person name="Hirokawa N."/>
            <person name="Hill D."/>
            <person name="Huminiecki L."/>
            <person name="Iacono M."/>
            <person name="Ikeo K."/>
            <person name="Iwama A."/>
            <person name="Ishikawa T."/>
            <person name="Jakt M."/>
            <person name="Kanapin A."/>
            <person name="Katoh M."/>
            <person name="Kawasawa Y."/>
            <person name="Kelso J."/>
            <person name="Kitamura H."/>
            <person name="Kitano H."/>
            <person name="Kollias G."/>
            <person name="Krishnan S.P."/>
            <person name="Kruger A."/>
            <person name="Kummerfeld S.K."/>
            <person name="Kurochkin I.V."/>
            <person name="Lareau L.F."/>
            <person name="Lazarevic D."/>
            <person name="Lipovich L."/>
            <person name="Liu J."/>
            <person name="Liuni S."/>
            <person name="McWilliam S."/>
            <person name="Madan Babu M."/>
            <person name="Madera M."/>
            <person name="Marchionni L."/>
            <person name="Matsuda H."/>
            <person name="Matsuzawa S."/>
            <person name="Miki H."/>
            <person name="Mignone F."/>
            <person name="Miyake S."/>
            <person name="Morris K."/>
            <person name="Mottagui-Tabar S."/>
            <person name="Mulder N."/>
            <person name="Nakano N."/>
            <person name="Nakauchi H."/>
            <person name="Ng P."/>
            <person name="Nilsson R."/>
            <person name="Nishiguchi S."/>
            <person name="Nishikawa S."/>
            <person name="Nori F."/>
            <person name="Ohara O."/>
            <person name="Okazaki Y."/>
            <person name="Orlando V."/>
            <person name="Pang K.C."/>
            <person name="Pavan W.J."/>
            <person name="Pavesi G."/>
            <person name="Pesole G."/>
            <person name="Petrovsky N."/>
            <person name="Piazza S."/>
            <person name="Reed J."/>
            <person name="Reid J.F."/>
            <person name="Ring B.Z."/>
            <person name="Ringwald M."/>
            <person name="Rost B."/>
            <person name="Ruan Y."/>
            <person name="Salzberg S.L."/>
            <person name="Sandelin A."/>
            <person name="Schneider C."/>
            <person name="Schoenbach C."/>
            <person name="Sekiguchi K."/>
            <person name="Semple C.A."/>
            <person name="Seno S."/>
            <person name="Sessa L."/>
            <person name="Sheng Y."/>
            <person name="Shibata Y."/>
            <person name="Shimada H."/>
            <person name="Shimada K."/>
            <person name="Silva D."/>
            <person name="Sinclair B."/>
            <person name="Sperling S."/>
            <person name="Stupka E."/>
            <person name="Sugiura K."/>
            <person name="Sultana R."/>
            <person name="Takenaka Y."/>
            <person name="Taki K."/>
            <person name="Tammoja K."/>
            <person name="Tan S.L."/>
            <person name="Tang S."/>
            <person name="Taylor M.S."/>
            <person name="Tegner J."/>
            <person name="Teichmann S.A."/>
            <person name="Ueda H.R."/>
            <person name="van Nimwegen E."/>
            <person name="Verardo R."/>
            <person name="Wei C.L."/>
            <person name="Yagi K."/>
            <person name="Yamanishi H."/>
            <person name="Zabarovsky E."/>
            <person name="Zhu S."/>
            <person name="Zimmer A."/>
            <person name="Hide W."/>
            <person name="Bult C."/>
            <person name="Grimmond S.M."/>
            <person name="Teasdale R.D."/>
            <person name="Liu E.T."/>
            <person name="Brusic V."/>
            <person name="Quackenbush J."/>
            <person name="Wahlestedt C."/>
            <person name="Mattick J.S."/>
            <person name="Hume D.A."/>
            <person name="Kai C."/>
            <person name="Sasaki D."/>
            <person name="Tomaru Y."/>
            <person name="Fukuda S."/>
            <person name="Kanamori-Katayama M."/>
            <person name="Suzuki M."/>
            <person name="Aoki J."/>
            <person name="Arakawa T."/>
            <person name="Iida J."/>
            <person name="Imamura K."/>
            <person name="Itoh M."/>
            <person name="Kato T."/>
            <person name="Kawaji H."/>
            <person name="Kawagashira N."/>
            <person name="Kawashima T."/>
            <person name="Kojima M."/>
            <person name="Kondo S."/>
            <person name="Konno H."/>
            <person name="Nakano K."/>
            <person name="Ninomiya N."/>
            <person name="Nishio T."/>
            <person name="Okada M."/>
            <person name="Plessy C."/>
            <person name="Shibata K."/>
            <person name="Shiraki T."/>
            <person name="Suzuki S."/>
            <person name="Tagami M."/>
            <person name="Waki K."/>
            <person name="Watahiki A."/>
            <person name="Okamura-Oho Y."/>
            <person name="Suzuki H."/>
            <person name="Kawai J."/>
            <person name="Hayashizaki Y."/>
        </authorList>
    </citation>
    <scope>NUCLEOTIDE SEQUENCE [LARGE SCALE MRNA]</scope>
    <source>
        <strain>C57BL/6J</strain>
        <tissue>Skin</tissue>
    </source>
</reference>
<reference key="2">
    <citation type="journal article" date="2004" name="Genome Res.">
        <title>The status, quality, and expansion of the NIH full-length cDNA project: the Mammalian Gene Collection (MGC).</title>
        <authorList>
            <consortium name="The MGC Project Team"/>
        </authorList>
    </citation>
    <scope>NUCLEOTIDE SEQUENCE [LARGE SCALE MRNA]</scope>
    <source>
        <tissue>Mammary gland</tissue>
    </source>
</reference>
<gene>
    <name evidence="3" type="primary">Lratd1</name>
    <name evidence="4" type="synonym">Fam84a</name>
</gene>
<protein>
    <recommendedName>
        <fullName evidence="3">Protein LRATD1</fullName>
    </recommendedName>
    <alternativeName>
        <fullName>LRAT domain-containing 1</fullName>
    </alternativeName>
    <alternativeName>
        <fullName>Protein FAM84A</fullName>
    </alternativeName>
</protein>
<dbReference type="EMBL" id="AK014625">
    <property type="protein sequence ID" value="BAB29470.1"/>
    <property type="molecule type" value="mRNA"/>
</dbReference>
<dbReference type="EMBL" id="BC005488">
    <property type="protein sequence ID" value="AAH05488.1"/>
    <property type="molecule type" value="mRNA"/>
</dbReference>
<dbReference type="CCDS" id="CCDS25820.1"/>
<dbReference type="RefSeq" id="NP_083283.2">
    <property type="nucleotide sequence ID" value="NM_029007.2"/>
</dbReference>
<dbReference type="SMR" id="Q9D650"/>
<dbReference type="FunCoup" id="Q9D650">
    <property type="interactions" value="3"/>
</dbReference>
<dbReference type="STRING" id="10090.ENSMUSP00000020926"/>
<dbReference type="iPTMnet" id="Q9D650"/>
<dbReference type="PhosphoSitePlus" id="Q9D650"/>
<dbReference type="PaxDb" id="10090-ENSMUSP00000020926"/>
<dbReference type="ProteomicsDB" id="266834"/>
<dbReference type="DNASU" id="105005"/>
<dbReference type="GeneID" id="105005"/>
<dbReference type="KEGG" id="mmu:105005"/>
<dbReference type="UCSC" id="uc007nbn.1">
    <property type="organism name" value="mouse"/>
</dbReference>
<dbReference type="AGR" id="MGI:2145011"/>
<dbReference type="CTD" id="151354"/>
<dbReference type="MGI" id="MGI:2145011">
    <property type="gene designation" value="Lratd1"/>
</dbReference>
<dbReference type="eggNOG" id="ENOG502QPSG">
    <property type="taxonomic scope" value="Eukaryota"/>
</dbReference>
<dbReference type="InParanoid" id="Q9D650"/>
<dbReference type="OrthoDB" id="6157531at2759"/>
<dbReference type="PhylomeDB" id="Q9D650"/>
<dbReference type="TreeFam" id="TF330836"/>
<dbReference type="BioGRID-ORCS" id="105005">
    <property type="hits" value="3 hits in 80 CRISPR screens"/>
</dbReference>
<dbReference type="PRO" id="PR:Q9D650"/>
<dbReference type="Proteomes" id="UP000000589">
    <property type="component" value="Unplaced"/>
</dbReference>
<dbReference type="RNAct" id="Q9D650">
    <property type="molecule type" value="protein"/>
</dbReference>
<dbReference type="GO" id="GO:0005737">
    <property type="term" value="C:cytoplasm"/>
    <property type="evidence" value="ECO:0007669"/>
    <property type="project" value="UniProtKB-SubCell"/>
</dbReference>
<dbReference type="GO" id="GO:0000902">
    <property type="term" value="P:cell morphogenesis"/>
    <property type="evidence" value="ECO:0000250"/>
    <property type="project" value="UniProtKB"/>
</dbReference>
<dbReference type="GO" id="GO:0048870">
    <property type="term" value="P:cell motility"/>
    <property type="evidence" value="ECO:0000250"/>
    <property type="project" value="UniProtKB"/>
</dbReference>
<dbReference type="FunFam" id="3.90.1720.10:FF:000003">
    <property type="entry name" value="FAM84B isoform 1"/>
    <property type="match status" value="1"/>
</dbReference>
<dbReference type="Gene3D" id="3.90.1720.10">
    <property type="entry name" value="endopeptidase domain like (from Nostoc punctiforme)"/>
    <property type="match status" value="1"/>
</dbReference>
<dbReference type="InterPro" id="IPR007053">
    <property type="entry name" value="LRAT_dom"/>
</dbReference>
<dbReference type="InterPro" id="IPR043299">
    <property type="entry name" value="LRATD1_LRATD2"/>
</dbReference>
<dbReference type="PANTHER" id="PTHR46341">
    <property type="entry name" value="PROTEIN FAM84B-RELATED"/>
    <property type="match status" value="1"/>
</dbReference>
<dbReference type="PANTHER" id="PTHR46341:SF1">
    <property type="entry name" value="PROTEIN LRATD1"/>
    <property type="match status" value="1"/>
</dbReference>
<dbReference type="Pfam" id="PF04970">
    <property type="entry name" value="LRAT"/>
    <property type="match status" value="1"/>
</dbReference>
<dbReference type="PROSITE" id="PS51934">
    <property type="entry name" value="LRAT"/>
    <property type="match status" value="1"/>
</dbReference>
<sequence>MGNQLDRITHLNYSELPTGDPSGIEKDELRVGVAYFFSDEEEDLDERGQPDKFGVKGPPGCSPCPESPSRHHHHLLHQLVLNETQFSAFRGQECIFSKVTGGPQGADLSVYAVTALPAICEPGDLLELLWLQPATEQPAPAPHWAVYVGGGQVIHLHQGEIRQDSLYQAGAANVGRVVNSWYRYRPLVAELVVQNACGHLGLKSEEICWTNSESFAAWCRFGKREFKAGGEVPAGTQPPQQQYYLKVHLEENKVHTARFHSLEDLIREKRRIDASGRLRVLQELEDFVDDKE</sequence>
<evidence type="ECO:0000250" key="1">
    <source>
        <dbReference type="UniProtKB" id="Q96KN4"/>
    </source>
</evidence>
<evidence type="ECO:0000255" key="2">
    <source>
        <dbReference type="PROSITE-ProRule" id="PRU01283"/>
    </source>
</evidence>
<evidence type="ECO:0000305" key="3"/>
<evidence type="ECO:0000312" key="4">
    <source>
        <dbReference type="MGI" id="MGI:2145011"/>
    </source>
</evidence>
<proteinExistence type="evidence at transcript level"/>
<name>LRAT1_MOUSE</name>
<feature type="chain" id="PRO_0000234426" description="Protein LRATD1">
    <location>
        <begin position="1"/>
        <end position="292"/>
    </location>
</feature>
<feature type="domain" description="LRAT" evidence="2">
    <location>
        <begin position="133"/>
        <end position="228"/>
    </location>
</feature>
<feature type="modified residue" description="Phosphoserine" evidence="1">
    <location>
        <position position="38"/>
    </location>
</feature>
<feature type="sequence conflict" description="In Ref. 2; AAH05488." evidence="3" ref="2">
    <original>V</original>
    <variation>I</variation>
    <location>
        <position position="153"/>
    </location>
</feature>
<organism>
    <name type="scientific">Mus musculus</name>
    <name type="common">Mouse</name>
    <dbReference type="NCBI Taxonomy" id="10090"/>
    <lineage>
        <taxon>Eukaryota</taxon>
        <taxon>Metazoa</taxon>
        <taxon>Chordata</taxon>
        <taxon>Craniata</taxon>
        <taxon>Vertebrata</taxon>
        <taxon>Euteleostomi</taxon>
        <taxon>Mammalia</taxon>
        <taxon>Eutheria</taxon>
        <taxon>Euarchontoglires</taxon>
        <taxon>Glires</taxon>
        <taxon>Rodentia</taxon>
        <taxon>Myomorpha</taxon>
        <taxon>Muroidea</taxon>
        <taxon>Muridae</taxon>
        <taxon>Murinae</taxon>
        <taxon>Mus</taxon>
        <taxon>Mus</taxon>
    </lineage>
</organism>
<keyword id="KW-0963">Cytoplasm</keyword>
<keyword id="KW-0597">Phosphoprotein</keyword>
<keyword id="KW-1185">Reference proteome</keyword>
<comment type="function">
    <text evidence="1">May play a role in cell morphology and motility.</text>
</comment>
<comment type="subcellular location">
    <subcellularLocation>
        <location evidence="1">Cytoplasm</location>
    </subcellularLocation>
</comment>
<comment type="similarity">
    <text evidence="3">Belongs to the LRATD family.</text>
</comment>